<keyword id="KW-1185">Reference proteome</keyword>
<keyword id="KW-0687">Ribonucleoprotein</keyword>
<keyword id="KW-0689">Ribosomal protein</keyword>
<keyword id="KW-0694">RNA-binding</keyword>
<keyword id="KW-0699">rRNA-binding</keyword>
<dbReference type="EMBL" id="CP001291">
    <property type="protein sequence ID" value="ACK72090.1"/>
    <property type="molecule type" value="Genomic_DNA"/>
</dbReference>
<dbReference type="RefSeq" id="WP_015955683.1">
    <property type="nucleotide sequence ID" value="NC_011729.1"/>
</dbReference>
<dbReference type="SMR" id="B7KHZ3"/>
<dbReference type="STRING" id="65393.PCC7424_3709"/>
<dbReference type="KEGG" id="cyc:PCC7424_3709"/>
<dbReference type="eggNOG" id="COG0092">
    <property type="taxonomic scope" value="Bacteria"/>
</dbReference>
<dbReference type="HOGENOM" id="CLU_058591_0_2_3"/>
<dbReference type="OrthoDB" id="9806396at2"/>
<dbReference type="Proteomes" id="UP000002384">
    <property type="component" value="Chromosome"/>
</dbReference>
<dbReference type="GO" id="GO:0022627">
    <property type="term" value="C:cytosolic small ribosomal subunit"/>
    <property type="evidence" value="ECO:0007669"/>
    <property type="project" value="TreeGrafter"/>
</dbReference>
<dbReference type="GO" id="GO:0003729">
    <property type="term" value="F:mRNA binding"/>
    <property type="evidence" value="ECO:0007669"/>
    <property type="project" value="UniProtKB-UniRule"/>
</dbReference>
<dbReference type="GO" id="GO:0019843">
    <property type="term" value="F:rRNA binding"/>
    <property type="evidence" value="ECO:0007669"/>
    <property type="project" value="UniProtKB-UniRule"/>
</dbReference>
<dbReference type="GO" id="GO:0003735">
    <property type="term" value="F:structural constituent of ribosome"/>
    <property type="evidence" value="ECO:0007669"/>
    <property type="project" value="InterPro"/>
</dbReference>
<dbReference type="GO" id="GO:0006412">
    <property type="term" value="P:translation"/>
    <property type="evidence" value="ECO:0007669"/>
    <property type="project" value="UniProtKB-UniRule"/>
</dbReference>
<dbReference type="CDD" id="cd02412">
    <property type="entry name" value="KH-II_30S_S3"/>
    <property type="match status" value="1"/>
</dbReference>
<dbReference type="FunFam" id="3.30.300.20:FF:000001">
    <property type="entry name" value="30S ribosomal protein S3"/>
    <property type="match status" value="1"/>
</dbReference>
<dbReference type="Gene3D" id="3.30.300.20">
    <property type="match status" value="1"/>
</dbReference>
<dbReference type="Gene3D" id="3.30.1140.32">
    <property type="entry name" value="Ribosomal protein S3, C-terminal domain"/>
    <property type="match status" value="1"/>
</dbReference>
<dbReference type="HAMAP" id="MF_01309_B">
    <property type="entry name" value="Ribosomal_uS3_B"/>
    <property type="match status" value="1"/>
</dbReference>
<dbReference type="InterPro" id="IPR004087">
    <property type="entry name" value="KH_dom"/>
</dbReference>
<dbReference type="InterPro" id="IPR015946">
    <property type="entry name" value="KH_dom-like_a/b"/>
</dbReference>
<dbReference type="InterPro" id="IPR004044">
    <property type="entry name" value="KH_dom_type_2"/>
</dbReference>
<dbReference type="InterPro" id="IPR009019">
    <property type="entry name" value="KH_sf_prok-type"/>
</dbReference>
<dbReference type="InterPro" id="IPR036419">
    <property type="entry name" value="Ribosomal_S3_C_sf"/>
</dbReference>
<dbReference type="InterPro" id="IPR005704">
    <property type="entry name" value="Ribosomal_uS3_bac-typ"/>
</dbReference>
<dbReference type="InterPro" id="IPR001351">
    <property type="entry name" value="Ribosomal_uS3_C"/>
</dbReference>
<dbReference type="InterPro" id="IPR018280">
    <property type="entry name" value="Ribosomal_uS3_CS"/>
</dbReference>
<dbReference type="NCBIfam" id="TIGR01009">
    <property type="entry name" value="rpsC_bact"/>
    <property type="match status" value="1"/>
</dbReference>
<dbReference type="PANTHER" id="PTHR11760">
    <property type="entry name" value="30S/40S RIBOSOMAL PROTEIN S3"/>
    <property type="match status" value="1"/>
</dbReference>
<dbReference type="PANTHER" id="PTHR11760:SF19">
    <property type="entry name" value="SMALL RIBOSOMAL SUBUNIT PROTEIN US3C"/>
    <property type="match status" value="1"/>
</dbReference>
<dbReference type="Pfam" id="PF07650">
    <property type="entry name" value="KH_2"/>
    <property type="match status" value="1"/>
</dbReference>
<dbReference type="Pfam" id="PF00189">
    <property type="entry name" value="Ribosomal_S3_C"/>
    <property type="match status" value="1"/>
</dbReference>
<dbReference type="SMART" id="SM00322">
    <property type="entry name" value="KH"/>
    <property type="match status" value="1"/>
</dbReference>
<dbReference type="SUPFAM" id="SSF54814">
    <property type="entry name" value="Prokaryotic type KH domain (KH-domain type II)"/>
    <property type="match status" value="1"/>
</dbReference>
<dbReference type="SUPFAM" id="SSF54821">
    <property type="entry name" value="Ribosomal protein S3 C-terminal domain"/>
    <property type="match status" value="1"/>
</dbReference>
<dbReference type="PROSITE" id="PS50823">
    <property type="entry name" value="KH_TYPE_2"/>
    <property type="match status" value="1"/>
</dbReference>
<dbReference type="PROSITE" id="PS00548">
    <property type="entry name" value="RIBOSOMAL_S3"/>
    <property type="match status" value="1"/>
</dbReference>
<protein>
    <recommendedName>
        <fullName evidence="1">Small ribosomal subunit protein uS3</fullName>
    </recommendedName>
    <alternativeName>
        <fullName evidence="3">30S ribosomal protein S3</fullName>
    </alternativeName>
</protein>
<accession>B7KHZ3</accession>
<comment type="function">
    <text evidence="1">Binds the lower part of the 30S subunit head. Binds mRNA in the 70S ribosome, positioning it for translation.</text>
</comment>
<comment type="subunit">
    <text evidence="1">Part of the 30S ribosomal subunit. Forms a tight complex with proteins S10 and S14.</text>
</comment>
<comment type="similarity">
    <text evidence="1">Belongs to the universal ribosomal protein uS3 family.</text>
</comment>
<organism>
    <name type="scientific">Gloeothece citriformis (strain PCC 7424)</name>
    <name type="common">Cyanothece sp. (strain PCC 7424)</name>
    <dbReference type="NCBI Taxonomy" id="65393"/>
    <lineage>
        <taxon>Bacteria</taxon>
        <taxon>Bacillati</taxon>
        <taxon>Cyanobacteriota</taxon>
        <taxon>Cyanophyceae</taxon>
        <taxon>Oscillatoriophycideae</taxon>
        <taxon>Chroococcales</taxon>
        <taxon>Aphanothecaceae</taxon>
        <taxon>Gloeothece</taxon>
        <taxon>Gloeothece citriformis</taxon>
    </lineage>
</organism>
<gene>
    <name evidence="1" type="primary">rpsC</name>
    <name evidence="1" type="synonym">rps3</name>
    <name type="ordered locus">PCC7424_3709</name>
</gene>
<feature type="chain" id="PRO_1000140952" description="Small ribosomal subunit protein uS3">
    <location>
        <begin position="1"/>
        <end position="240"/>
    </location>
</feature>
<feature type="domain" description="KH type-2" evidence="1">
    <location>
        <begin position="39"/>
        <end position="109"/>
    </location>
</feature>
<feature type="region of interest" description="Disordered" evidence="2">
    <location>
        <begin position="214"/>
        <end position="240"/>
    </location>
</feature>
<proteinExistence type="inferred from homology"/>
<reference key="1">
    <citation type="journal article" date="2011" name="MBio">
        <title>Novel metabolic attributes of the genus Cyanothece, comprising a group of unicellular nitrogen-fixing Cyanobacteria.</title>
        <authorList>
            <person name="Bandyopadhyay A."/>
            <person name="Elvitigala T."/>
            <person name="Welsh E."/>
            <person name="Stockel J."/>
            <person name="Liberton M."/>
            <person name="Min H."/>
            <person name="Sherman L.A."/>
            <person name="Pakrasi H.B."/>
        </authorList>
    </citation>
    <scope>NUCLEOTIDE SEQUENCE [LARGE SCALE GENOMIC DNA]</scope>
    <source>
        <strain>PCC 7424</strain>
    </source>
</reference>
<evidence type="ECO:0000255" key="1">
    <source>
        <dbReference type="HAMAP-Rule" id="MF_01309"/>
    </source>
</evidence>
<evidence type="ECO:0000256" key="2">
    <source>
        <dbReference type="SAM" id="MobiDB-lite"/>
    </source>
</evidence>
<evidence type="ECO:0000305" key="3"/>
<sequence length="240" mass="27397">MGQKIHPVGFRLGITKEHKSRWFADKYHYPELLQEDRKIRQYVEKNLSNAGISDIRIERKADQVDIEIHTARPGVVVGRGGSGIEALRVGLQNALGGHRQIRINVVEVARVDADATLIAEYIAQQLERRVSFRRVVRQAIQRAQRAEVKGIKVQVSGRLNGAEIARTEWIREGRVPLHTLRADIDFAYRTAKTIYGILGVKIWVFKGEIIPGQEEQAPAQPATTPKRQRRRQQFEDRSNE</sequence>
<name>RS3_GLOC7</name>